<comment type="subcellular location">
    <subcellularLocation>
        <location evidence="2">Membrane</location>
        <topology evidence="2">Multi-pass membrane protein</topology>
    </subcellularLocation>
</comment>
<comment type="similarity">
    <text evidence="2">Belongs to the UPF0057 (PMP3) family.</text>
</comment>
<keyword id="KW-0472">Membrane</keyword>
<keyword id="KW-1185">Reference proteome</keyword>
<keyword id="KW-0812">Transmembrane</keyword>
<keyword id="KW-1133">Transmembrane helix</keyword>
<dbReference type="EMBL" id="FO080954">
    <property type="protein sequence ID" value="CCD68070.1"/>
    <property type="molecule type" value="Genomic_DNA"/>
</dbReference>
<dbReference type="PIR" id="T16930">
    <property type="entry name" value="T16930"/>
</dbReference>
<dbReference type="RefSeq" id="NP_001370602.1">
    <property type="nucleotide sequence ID" value="NM_001383581.2"/>
</dbReference>
<dbReference type="RefSeq" id="NP_508936.1">
    <property type="nucleotide sequence ID" value="NM_076535.3"/>
</dbReference>
<dbReference type="SMR" id="Q22702"/>
<dbReference type="BioGRID" id="45756">
    <property type="interactions" value="2"/>
</dbReference>
<dbReference type="FunCoup" id="Q22702">
    <property type="interactions" value="22"/>
</dbReference>
<dbReference type="IntAct" id="Q22702">
    <property type="interactions" value="2"/>
</dbReference>
<dbReference type="PaxDb" id="6239-T23F2.5"/>
<dbReference type="PeptideAtlas" id="Q22702"/>
<dbReference type="EnsemblMetazoa" id="T23F2.5.1">
    <property type="protein sequence ID" value="T23F2.5.1"/>
    <property type="gene ID" value="WBGene00020738"/>
</dbReference>
<dbReference type="GeneID" id="180823"/>
<dbReference type="UCSC" id="T23F2.5">
    <property type="organism name" value="c. elegans"/>
</dbReference>
<dbReference type="AGR" id="WB:WBGene00020738"/>
<dbReference type="WormBase" id="T23F2.5">
    <property type="protein sequence ID" value="CE05000"/>
    <property type="gene ID" value="WBGene00020738"/>
</dbReference>
<dbReference type="eggNOG" id="KOG1773">
    <property type="taxonomic scope" value="Eukaryota"/>
</dbReference>
<dbReference type="GeneTree" id="ENSGT00970000196157"/>
<dbReference type="HOGENOM" id="CLU_107649_6_2_1"/>
<dbReference type="InParanoid" id="Q22702"/>
<dbReference type="OMA" id="VHAIWVI"/>
<dbReference type="OrthoDB" id="2802411at2759"/>
<dbReference type="PhylomeDB" id="Q22702"/>
<dbReference type="PRO" id="PR:Q22702"/>
<dbReference type="Proteomes" id="UP000001940">
    <property type="component" value="Chromosome X"/>
</dbReference>
<dbReference type="Bgee" id="WBGene00020738">
    <property type="expression patterns" value="Expressed in embryo and 4 other cell types or tissues"/>
</dbReference>
<dbReference type="GO" id="GO:0016020">
    <property type="term" value="C:membrane"/>
    <property type="evidence" value="ECO:0007669"/>
    <property type="project" value="UniProtKB-SubCell"/>
</dbReference>
<dbReference type="InterPro" id="IPR000612">
    <property type="entry name" value="PMP3"/>
</dbReference>
<dbReference type="PANTHER" id="PTHR21659">
    <property type="entry name" value="HYDROPHOBIC PROTEIN RCI2 LOW TEMPERATURE AND SALT RESPONSIVE PROTEIN LTI6 -RELATED"/>
    <property type="match status" value="1"/>
</dbReference>
<dbReference type="PANTHER" id="PTHR21659:SF105">
    <property type="entry name" value="PLASMA MEMBRANE PROTEOLIPID 3-RELATED"/>
    <property type="match status" value="1"/>
</dbReference>
<dbReference type="Pfam" id="PF01679">
    <property type="entry name" value="Pmp3"/>
    <property type="match status" value="1"/>
</dbReference>
<dbReference type="PROSITE" id="PS01309">
    <property type="entry name" value="UPF0057"/>
    <property type="match status" value="1"/>
</dbReference>
<protein>
    <recommendedName>
        <fullName>UPF0057 membrane protein T23F2.5</fullName>
    </recommendedName>
</protein>
<proteinExistence type="inferred from homology"/>
<name>YCU5_CAEEL</name>
<sequence length="57" mass="6275">MALTCTDIPKFLCALLLPPIGVWLEKGCTYHLAINILLTILGYIPGIIHACYVILAY</sequence>
<feature type="chain" id="PRO_0000193995" description="UPF0057 membrane protein T23F2.5">
    <location>
        <begin position="1"/>
        <end position="57"/>
    </location>
</feature>
<feature type="transmembrane region" description="Helical" evidence="1">
    <location>
        <begin position="3"/>
        <end position="23"/>
    </location>
</feature>
<feature type="transmembrane region" description="Helical" evidence="1">
    <location>
        <begin position="36"/>
        <end position="56"/>
    </location>
</feature>
<reference key="1">
    <citation type="journal article" date="1998" name="Science">
        <title>Genome sequence of the nematode C. elegans: a platform for investigating biology.</title>
        <authorList>
            <consortium name="The C. elegans sequencing consortium"/>
        </authorList>
    </citation>
    <scope>NUCLEOTIDE SEQUENCE [LARGE SCALE GENOMIC DNA]</scope>
    <source>
        <strain>Bristol N2</strain>
    </source>
</reference>
<gene>
    <name type="ORF">T23F2.5</name>
</gene>
<evidence type="ECO:0000255" key="1"/>
<evidence type="ECO:0000305" key="2"/>
<accession>Q22702</accession>
<organism>
    <name type="scientific">Caenorhabditis elegans</name>
    <dbReference type="NCBI Taxonomy" id="6239"/>
    <lineage>
        <taxon>Eukaryota</taxon>
        <taxon>Metazoa</taxon>
        <taxon>Ecdysozoa</taxon>
        <taxon>Nematoda</taxon>
        <taxon>Chromadorea</taxon>
        <taxon>Rhabditida</taxon>
        <taxon>Rhabditina</taxon>
        <taxon>Rhabditomorpha</taxon>
        <taxon>Rhabditoidea</taxon>
        <taxon>Rhabditidae</taxon>
        <taxon>Peloderinae</taxon>
        <taxon>Caenorhabditis</taxon>
    </lineage>
</organism>